<evidence type="ECO:0000250" key="1">
    <source>
        <dbReference type="UniProtKB" id="Q13114"/>
    </source>
</evidence>
<evidence type="ECO:0000255" key="2"/>
<evidence type="ECO:0000255" key="3">
    <source>
        <dbReference type="PROSITE-ProRule" id="PRU00129"/>
    </source>
</evidence>
<evidence type="ECO:0000255" key="4">
    <source>
        <dbReference type="PROSITE-ProRule" id="PRU00175"/>
    </source>
</evidence>
<evidence type="ECO:0000255" key="5">
    <source>
        <dbReference type="PROSITE-ProRule" id="PRU00207"/>
    </source>
</evidence>
<evidence type="ECO:0000256" key="6">
    <source>
        <dbReference type="SAM" id="MobiDB-lite"/>
    </source>
</evidence>
<evidence type="ECO:0000269" key="7">
    <source>
    </source>
</evidence>
<evidence type="ECO:0000269" key="8">
    <source>
    </source>
</evidence>
<evidence type="ECO:0000269" key="9">
    <source>
    </source>
</evidence>
<evidence type="ECO:0000269" key="10">
    <source>
    </source>
</evidence>
<evidence type="ECO:0000269" key="11">
    <source>
    </source>
</evidence>
<evidence type="ECO:0000269" key="12">
    <source>
    </source>
</evidence>
<evidence type="ECO:0000269" key="13">
    <source>
    </source>
</evidence>
<evidence type="ECO:0000269" key="14">
    <source>
    </source>
</evidence>
<evidence type="ECO:0000269" key="15">
    <source>
    </source>
</evidence>
<evidence type="ECO:0000269" key="16">
    <source>
    </source>
</evidence>
<evidence type="ECO:0000269" key="17">
    <source>
    </source>
</evidence>
<evidence type="ECO:0000269" key="18">
    <source>
    </source>
</evidence>
<evidence type="ECO:0000269" key="19">
    <source>
    </source>
</evidence>
<evidence type="ECO:0000269" key="20">
    <source>
    </source>
</evidence>
<evidence type="ECO:0000269" key="21">
    <source>
    </source>
</evidence>
<evidence type="ECO:0000269" key="22">
    <source>
    </source>
</evidence>
<evidence type="ECO:0000269" key="23">
    <source>
    </source>
</evidence>
<evidence type="ECO:0000269" key="24">
    <source>
    </source>
</evidence>
<evidence type="ECO:0000269" key="25">
    <source>
    </source>
</evidence>
<evidence type="ECO:0000269" key="26">
    <source>
    </source>
</evidence>
<evidence type="ECO:0000303" key="27">
    <source>
    </source>
</evidence>
<evidence type="ECO:0000303" key="28">
    <source>
    </source>
</evidence>
<evidence type="ECO:0000305" key="29"/>
<evidence type="ECO:0000312" key="30">
    <source>
        <dbReference type="MGI" id="MGI:108041"/>
    </source>
</evidence>
<evidence type="ECO:0007744" key="31">
    <source>
        <dbReference type="PDB" id="4GHU"/>
    </source>
</evidence>
<evidence type="ECO:0007829" key="32">
    <source>
        <dbReference type="PDB" id="4GHU"/>
    </source>
</evidence>
<keyword id="KW-0002">3D-structure</keyword>
<keyword id="KW-0053">Apoptosis</keyword>
<keyword id="KW-0175">Coiled coil</keyword>
<keyword id="KW-0963">Cytoplasm</keyword>
<keyword id="KW-0967">Endosome</keyword>
<keyword id="KW-0391">Immunity</keyword>
<keyword id="KW-1017">Isopeptide bond</keyword>
<keyword id="KW-0479">Metal-binding</keyword>
<keyword id="KW-0496">Mitochondrion</keyword>
<keyword id="KW-1185">Reference proteome</keyword>
<keyword id="KW-0677">Repeat</keyword>
<keyword id="KW-0882">Thioester bond</keyword>
<keyword id="KW-0808">Transferase</keyword>
<keyword id="KW-0832">Ubl conjugation</keyword>
<keyword id="KW-0833">Ubl conjugation pathway</keyword>
<keyword id="KW-0862">Zinc</keyword>
<keyword id="KW-0863">Zinc-finger</keyword>
<gene>
    <name evidence="30" type="primary">Traf3</name>
    <name evidence="30" type="synonym">Cap-1</name>
    <name evidence="27" type="synonym">Craf1</name>
    <name evidence="28" type="synonym">Trafamn</name>
</gene>
<dbReference type="EC" id="2.3.2.27"/>
<dbReference type="EMBL" id="U21050">
    <property type="protein sequence ID" value="AAC52175.1"/>
    <property type="molecule type" value="mRNA"/>
</dbReference>
<dbReference type="EMBL" id="U33840">
    <property type="protein sequence ID" value="AAC52710.1"/>
    <property type="molecule type" value="mRNA"/>
</dbReference>
<dbReference type="EMBL" id="CH466549">
    <property type="protein sequence ID" value="EDL18642.1"/>
    <property type="molecule type" value="Genomic_DNA"/>
</dbReference>
<dbReference type="EMBL" id="BC137634">
    <property type="protein sequence ID" value="AAI37635.1"/>
    <property type="molecule type" value="mRNA"/>
</dbReference>
<dbReference type="EMBL" id="BC137635">
    <property type="protein sequence ID" value="AAI37636.1"/>
    <property type="molecule type" value="mRNA"/>
</dbReference>
<dbReference type="CCDS" id="CCDS26175.1"/>
<dbReference type="PIR" id="I49272">
    <property type="entry name" value="I49272"/>
</dbReference>
<dbReference type="RefSeq" id="NP_001409354.1">
    <property type="nucleotide sequence ID" value="NM_001422425.1"/>
</dbReference>
<dbReference type="RefSeq" id="NP_001409355.1">
    <property type="nucleotide sequence ID" value="NM_001422426.1"/>
</dbReference>
<dbReference type="RefSeq" id="NP_035762.2">
    <property type="nucleotide sequence ID" value="NM_011632.3"/>
</dbReference>
<dbReference type="RefSeq" id="XP_006515861.1">
    <property type="nucleotide sequence ID" value="XM_006515798.2"/>
</dbReference>
<dbReference type="RefSeq" id="XP_006515862.1">
    <property type="nucleotide sequence ID" value="XM_006515799.2"/>
</dbReference>
<dbReference type="RefSeq" id="XP_006515863.1">
    <property type="nucleotide sequence ID" value="XM_006515800.3"/>
</dbReference>
<dbReference type="RefSeq" id="XP_006515864.1">
    <property type="nucleotide sequence ID" value="XM_006515801.2"/>
</dbReference>
<dbReference type="RefSeq" id="XP_030102544.1">
    <property type="nucleotide sequence ID" value="XM_030246684.2"/>
</dbReference>
<dbReference type="RefSeq" id="XP_036013273.1">
    <property type="nucleotide sequence ID" value="XM_036157380.1"/>
</dbReference>
<dbReference type="PDB" id="4GHU">
    <property type="method" value="X-ray"/>
    <property type="resolution" value="2.20 A"/>
    <property type="chains" value="A=376-567"/>
</dbReference>
<dbReference type="PDBsum" id="4GHU"/>
<dbReference type="SMR" id="Q60803"/>
<dbReference type="BioGRID" id="204304">
    <property type="interactions" value="96"/>
</dbReference>
<dbReference type="CORUM" id="Q60803"/>
<dbReference type="DIP" id="DIP-34050N"/>
<dbReference type="FunCoup" id="Q60803">
    <property type="interactions" value="1033"/>
</dbReference>
<dbReference type="IntAct" id="Q60803">
    <property type="interactions" value="34"/>
</dbReference>
<dbReference type="MINT" id="Q60803"/>
<dbReference type="STRING" id="10090.ENSMUSP00000021706"/>
<dbReference type="iPTMnet" id="Q60803"/>
<dbReference type="PhosphoSitePlus" id="Q60803"/>
<dbReference type="SwissPalm" id="Q60803"/>
<dbReference type="PaxDb" id="10090-ENSMUSP00000021706"/>
<dbReference type="PeptideAtlas" id="Q60803"/>
<dbReference type="ProteomicsDB" id="258961"/>
<dbReference type="Pumba" id="Q60803"/>
<dbReference type="Antibodypedia" id="129">
    <property type="antibodies" value="532 antibodies from 44 providers"/>
</dbReference>
<dbReference type="DNASU" id="22031"/>
<dbReference type="Ensembl" id="ENSMUST00000021706.11">
    <property type="protein sequence ID" value="ENSMUSP00000021706.5"/>
    <property type="gene ID" value="ENSMUSG00000021277.17"/>
</dbReference>
<dbReference type="GeneID" id="22031"/>
<dbReference type="KEGG" id="mmu:22031"/>
<dbReference type="UCSC" id="uc007pcl.2">
    <property type="organism name" value="mouse"/>
</dbReference>
<dbReference type="AGR" id="MGI:108041"/>
<dbReference type="CTD" id="7187"/>
<dbReference type="MGI" id="MGI:108041">
    <property type="gene designation" value="Traf3"/>
</dbReference>
<dbReference type="VEuPathDB" id="HostDB:ENSMUSG00000021277"/>
<dbReference type="eggNOG" id="KOG0297">
    <property type="taxonomic scope" value="Eukaryota"/>
</dbReference>
<dbReference type="GeneTree" id="ENSGT00940000160538"/>
<dbReference type="InParanoid" id="Q60803"/>
<dbReference type="OMA" id="TCEFCMT"/>
<dbReference type="OrthoDB" id="1737200at2759"/>
<dbReference type="PhylomeDB" id="Q60803"/>
<dbReference type="TreeFam" id="TF321154"/>
<dbReference type="Reactome" id="R-MMU-5668541">
    <property type="pathway name" value="TNFR2 non-canonical NF-kB pathway"/>
</dbReference>
<dbReference type="Reactome" id="R-MMU-5676594">
    <property type="pathway name" value="TNF receptor superfamily (TNFSF) members mediating non-canonical NF-kB pathway"/>
</dbReference>
<dbReference type="Reactome" id="R-MMU-5689896">
    <property type="pathway name" value="Ovarian tumor domain proteases"/>
</dbReference>
<dbReference type="Reactome" id="R-MMU-936964">
    <property type="pathway name" value="Activation of IRF3, IRF7 mediated by TBK1, IKKEpsilon (IKBKE)"/>
</dbReference>
<dbReference type="Reactome" id="R-MMU-9824878">
    <property type="pathway name" value="Regulation of TBK1, IKKEpsilon (IKBKE)-mediated activation of IRF3, IRF7"/>
</dbReference>
<dbReference type="BioGRID-ORCS" id="22031">
    <property type="hits" value="22 hits in 86 CRISPR screens"/>
</dbReference>
<dbReference type="CD-CODE" id="CE726F99">
    <property type="entry name" value="Postsynaptic density"/>
</dbReference>
<dbReference type="ChiTaRS" id="Traf3">
    <property type="organism name" value="mouse"/>
</dbReference>
<dbReference type="EvolutionaryTrace" id="Q60803"/>
<dbReference type="PRO" id="PR:Q60803"/>
<dbReference type="Proteomes" id="UP000000589">
    <property type="component" value="Chromosome 12"/>
</dbReference>
<dbReference type="RNAct" id="Q60803">
    <property type="molecule type" value="protein"/>
</dbReference>
<dbReference type="Bgee" id="ENSMUSG00000021277">
    <property type="expression patterns" value="Expressed in CA3 field of hippocampus and 255 other cell types or tissues"/>
</dbReference>
<dbReference type="ExpressionAtlas" id="Q60803">
    <property type="expression patterns" value="baseline and differential"/>
</dbReference>
<dbReference type="GO" id="GO:0035631">
    <property type="term" value="C:CD40 receptor complex"/>
    <property type="evidence" value="ECO:0000314"/>
    <property type="project" value="BHF-UCL"/>
</dbReference>
<dbReference type="GO" id="GO:0009898">
    <property type="term" value="C:cytoplasmic side of plasma membrane"/>
    <property type="evidence" value="ECO:0000314"/>
    <property type="project" value="BHF-UCL"/>
</dbReference>
<dbReference type="GO" id="GO:0010008">
    <property type="term" value="C:endosome membrane"/>
    <property type="evidence" value="ECO:0007669"/>
    <property type="project" value="Ensembl"/>
</dbReference>
<dbReference type="GO" id="GO:0005739">
    <property type="term" value="C:mitochondrion"/>
    <property type="evidence" value="ECO:0007669"/>
    <property type="project" value="UniProtKB-SubCell"/>
</dbReference>
<dbReference type="GO" id="GO:0042802">
    <property type="term" value="F:identical protein binding"/>
    <property type="evidence" value="ECO:0007669"/>
    <property type="project" value="Ensembl"/>
</dbReference>
<dbReference type="GO" id="GO:0019901">
    <property type="term" value="F:protein kinase binding"/>
    <property type="evidence" value="ECO:0000353"/>
    <property type="project" value="UniProtKB"/>
</dbReference>
<dbReference type="GO" id="GO:0019903">
    <property type="term" value="F:protein phosphatase binding"/>
    <property type="evidence" value="ECO:0007669"/>
    <property type="project" value="Ensembl"/>
</dbReference>
<dbReference type="GO" id="GO:0031996">
    <property type="term" value="F:thioesterase binding"/>
    <property type="evidence" value="ECO:0007669"/>
    <property type="project" value="Ensembl"/>
</dbReference>
<dbReference type="GO" id="GO:0005164">
    <property type="term" value="F:tumor necrosis factor receptor binding"/>
    <property type="evidence" value="ECO:0007669"/>
    <property type="project" value="Ensembl"/>
</dbReference>
<dbReference type="GO" id="GO:0061630">
    <property type="term" value="F:ubiquitin protein ligase activity"/>
    <property type="evidence" value="ECO:0007669"/>
    <property type="project" value="Ensembl"/>
</dbReference>
<dbReference type="GO" id="GO:0031625">
    <property type="term" value="F:ubiquitin protein ligase binding"/>
    <property type="evidence" value="ECO:0007669"/>
    <property type="project" value="Ensembl"/>
</dbReference>
<dbReference type="GO" id="GO:0008270">
    <property type="term" value="F:zinc ion binding"/>
    <property type="evidence" value="ECO:0007669"/>
    <property type="project" value="UniProtKB-KW"/>
</dbReference>
<dbReference type="GO" id="GO:0006915">
    <property type="term" value="P:apoptotic process"/>
    <property type="evidence" value="ECO:0007669"/>
    <property type="project" value="UniProtKB-KW"/>
</dbReference>
<dbReference type="GO" id="GO:0045087">
    <property type="term" value="P:innate immune response"/>
    <property type="evidence" value="ECO:0007669"/>
    <property type="project" value="InterPro"/>
</dbReference>
<dbReference type="GO" id="GO:0032088">
    <property type="term" value="P:negative regulation of NF-kappaB transcription factor activity"/>
    <property type="evidence" value="ECO:0000315"/>
    <property type="project" value="UniProtKB"/>
</dbReference>
<dbReference type="GO" id="GO:0032481">
    <property type="term" value="P:positive regulation of type I interferon production"/>
    <property type="evidence" value="ECO:0007669"/>
    <property type="project" value="Ensembl"/>
</dbReference>
<dbReference type="GO" id="GO:0042981">
    <property type="term" value="P:regulation of apoptotic process"/>
    <property type="evidence" value="ECO:0007669"/>
    <property type="project" value="InterPro"/>
</dbReference>
<dbReference type="GO" id="GO:0001817">
    <property type="term" value="P:regulation of cytokine production"/>
    <property type="evidence" value="ECO:0000315"/>
    <property type="project" value="UniProtKB"/>
</dbReference>
<dbReference type="GO" id="GO:0050688">
    <property type="term" value="P:regulation of defense response to virus"/>
    <property type="evidence" value="ECO:0000315"/>
    <property type="project" value="UniProtKB"/>
</dbReference>
<dbReference type="GO" id="GO:0032648">
    <property type="term" value="P:regulation of interferon-beta production"/>
    <property type="evidence" value="ECO:0000315"/>
    <property type="project" value="UniProtKB"/>
</dbReference>
<dbReference type="GO" id="GO:0030162">
    <property type="term" value="P:regulation of proteolysis"/>
    <property type="evidence" value="ECO:0000314"/>
    <property type="project" value="UniProtKB"/>
</dbReference>
<dbReference type="GO" id="GO:0008063">
    <property type="term" value="P:Toll signaling pathway"/>
    <property type="evidence" value="ECO:0007669"/>
    <property type="project" value="InterPro"/>
</dbReference>
<dbReference type="GO" id="GO:0034142">
    <property type="term" value="P:toll-like receptor 4 signaling pathway"/>
    <property type="evidence" value="ECO:0007669"/>
    <property type="project" value="Ensembl"/>
</dbReference>
<dbReference type="GO" id="GO:0002224">
    <property type="term" value="P:toll-like receptor signaling pathway"/>
    <property type="evidence" value="ECO:0000315"/>
    <property type="project" value="UniProtKB"/>
</dbReference>
<dbReference type="GO" id="GO:0033209">
    <property type="term" value="P:tumor necrosis factor-mediated signaling pathway"/>
    <property type="evidence" value="ECO:0000315"/>
    <property type="project" value="UniProtKB"/>
</dbReference>
<dbReference type="CDD" id="cd03777">
    <property type="entry name" value="MATH_TRAF3"/>
    <property type="match status" value="1"/>
</dbReference>
<dbReference type="CDD" id="cd16640">
    <property type="entry name" value="RING-HC_TRAF3"/>
    <property type="match status" value="1"/>
</dbReference>
<dbReference type="FunFam" id="2.60.210.10:FF:000001">
    <property type="entry name" value="TNF receptor-associated factor"/>
    <property type="match status" value="1"/>
</dbReference>
<dbReference type="FunFam" id="3.30.40.10:FF:000244">
    <property type="entry name" value="TNF receptor-associated factor"/>
    <property type="match status" value="1"/>
</dbReference>
<dbReference type="FunFam" id="3.30.40.10:FF:000286">
    <property type="entry name" value="TNF receptor-associated factor"/>
    <property type="match status" value="1"/>
</dbReference>
<dbReference type="FunFam" id="3.30.40.10:FF:000346">
    <property type="entry name" value="TNF receptor-associated factor"/>
    <property type="match status" value="1"/>
</dbReference>
<dbReference type="Gene3D" id="2.60.210.10">
    <property type="entry name" value="Apoptosis, Tumor Necrosis Factor Receptor Associated Protein 2, Chain A"/>
    <property type="match status" value="1"/>
</dbReference>
<dbReference type="Gene3D" id="3.30.40.10">
    <property type="entry name" value="Zinc/RING finger domain, C3HC4 (zinc finger)"/>
    <property type="match status" value="3"/>
</dbReference>
<dbReference type="InterPro" id="IPR002083">
    <property type="entry name" value="MATH/TRAF_dom"/>
</dbReference>
<dbReference type="InterPro" id="IPR012227">
    <property type="entry name" value="TNF_rcpt-assoc_TRAF_met"/>
</dbReference>
<dbReference type="InterPro" id="IPR008974">
    <property type="entry name" value="TRAF-like"/>
</dbReference>
<dbReference type="InterPro" id="IPR049342">
    <property type="entry name" value="TRAF1-6_MATH_dom"/>
</dbReference>
<dbReference type="InterPro" id="IPR049440">
    <property type="entry name" value="TRAF3/5_RING"/>
</dbReference>
<dbReference type="InterPro" id="IPR037304">
    <property type="entry name" value="TRAF3_MATH"/>
</dbReference>
<dbReference type="InterPro" id="IPR027128">
    <property type="entry name" value="TRAF3_RING-HC"/>
</dbReference>
<dbReference type="InterPro" id="IPR001841">
    <property type="entry name" value="Znf_RING"/>
</dbReference>
<dbReference type="InterPro" id="IPR013083">
    <property type="entry name" value="Znf_RING/FYVE/PHD"/>
</dbReference>
<dbReference type="InterPro" id="IPR017907">
    <property type="entry name" value="Znf_RING_CS"/>
</dbReference>
<dbReference type="InterPro" id="IPR001293">
    <property type="entry name" value="Znf_TRAF"/>
</dbReference>
<dbReference type="PANTHER" id="PTHR10131">
    <property type="entry name" value="TNF RECEPTOR ASSOCIATED FACTOR"/>
    <property type="match status" value="1"/>
</dbReference>
<dbReference type="PANTHER" id="PTHR10131:SF76">
    <property type="entry name" value="TNF RECEPTOR-ASSOCIATED FACTOR 3"/>
    <property type="match status" value="1"/>
</dbReference>
<dbReference type="Pfam" id="PF21355">
    <property type="entry name" value="TRAF-mep_MATH"/>
    <property type="match status" value="1"/>
</dbReference>
<dbReference type="Pfam" id="PF21363">
    <property type="entry name" value="TRAF3_RING"/>
    <property type="match status" value="1"/>
</dbReference>
<dbReference type="Pfam" id="PF02176">
    <property type="entry name" value="zf-TRAF"/>
    <property type="match status" value="1"/>
</dbReference>
<dbReference type="PIRSF" id="PIRSF015614">
    <property type="entry name" value="TRAF"/>
    <property type="match status" value="1"/>
</dbReference>
<dbReference type="SMART" id="SM00061">
    <property type="entry name" value="MATH"/>
    <property type="match status" value="1"/>
</dbReference>
<dbReference type="SUPFAM" id="SSF57850">
    <property type="entry name" value="RING/U-box"/>
    <property type="match status" value="1"/>
</dbReference>
<dbReference type="SUPFAM" id="SSF49599">
    <property type="entry name" value="TRAF domain-like"/>
    <property type="match status" value="3"/>
</dbReference>
<dbReference type="SUPFAM" id="SSF57953">
    <property type="entry name" value="Trimerization domain of TRAF"/>
    <property type="match status" value="1"/>
</dbReference>
<dbReference type="PROSITE" id="PS50144">
    <property type="entry name" value="MATH"/>
    <property type="match status" value="1"/>
</dbReference>
<dbReference type="PROSITE" id="PS00518">
    <property type="entry name" value="ZF_RING_1"/>
    <property type="match status" value="1"/>
</dbReference>
<dbReference type="PROSITE" id="PS50089">
    <property type="entry name" value="ZF_RING_2"/>
    <property type="match status" value="1"/>
</dbReference>
<dbReference type="PROSITE" id="PS50145">
    <property type="entry name" value="ZF_TRAF"/>
    <property type="match status" value="2"/>
</dbReference>
<protein>
    <recommendedName>
        <fullName evidence="30">TNF receptor-associated factor 3</fullName>
        <ecNumber>2.3.2.27</ecNumber>
    </recommendedName>
    <alternativeName>
        <fullName evidence="27">CD40 receptor-associated factor 1</fullName>
        <shortName evidence="30">CRAF1</shortName>
    </alternativeName>
    <alternativeName>
        <fullName evidence="30">CD40-binding protein</fullName>
        <shortName evidence="30">CD40BP</shortName>
    </alternativeName>
    <alternativeName>
        <fullName evidence="29">RING-type E3 ubiquitin transferase TRAF3</fullName>
    </alternativeName>
</protein>
<proteinExistence type="evidence at protein level"/>
<feature type="chain" id="PRO_0000056402" description="TNF receptor-associated factor 3">
    <location>
        <begin position="1"/>
        <end position="567"/>
    </location>
</feature>
<feature type="domain" description="MATH" evidence="3">
    <location>
        <begin position="414"/>
        <end position="559"/>
    </location>
</feature>
<feature type="zinc finger region" description="RING-type" evidence="4">
    <location>
        <begin position="67"/>
        <end position="76"/>
    </location>
</feature>
<feature type="zinc finger region" description="TRAF-type 1" evidence="5">
    <location>
        <begin position="134"/>
        <end position="189"/>
    </location>
</feature>
<feature type="zinc finger region" description="TRAF-type 2" evidence="5">
    <location>
        <begin position="190"/>
        <end position="248"/>
    </location>
</feature>
<feature type="region of interest" description="Disordered" evidence="6">
    <location>
        <begin position="1"/>
        <end position="26"/>
    </location>
</feature>
<feature type="coiled-coil region" evidence="2">
    <location>
        <begin position="266"/>
        <end position="337"/>
    </location>
</feature>
<feature type="cross-link" description="Glycyl cysteine thioester (Cys-Gly) (interchain with G-Cter in ubiquitin)" evidence="1">
    <location>
        <position position="55"/>
    </location>
</feature>
<feature type="cross-link" description="Glycyl lysine isopeptide (Lys-Gly) (interchain with G-Cter in ubiquitin)" evidence="29">
    <location>
        <position position="106"/>
    </location>
</feature>
<feature type="cross-link" description="Glycyl cysteine thioester (Cys-Gly) (interchain with G-Cter in ubiquitin)" evidence="1">
    <location>
        <position position="123"/>
    </location>
</feature>
<feature type="cross-link" description="Glycyl lysine isopeptide (Lys-Gly) (interchain with G-Cter in ubiquitin)" evidence="29">
    <location>
        <position position="155"/>
    </location>
</feature>
<feature type="cross-link" description="Glycyl lysine isopeptide (Lys-Gly) (interchain with G-Cter in ubiquitin)" evidence="1">
    <location>
        <position position="167"/>
    </location>
</feature>
<feature type="cross-link" description="Glycyl lysine isopeptide (Lys-Gly) (interchain with G-Cter in ubiquitin)" evidence="19">
    <location>
        <position position="328"/>
    </location>
</feature>
<feature type="mutagenesis site" description="Abolishes inhibition of NFKB2 processing; when associated with A-55." evidence="10">
    <original>C</original>
    <variation>A</variation>
    <location>
        <position position="52"/>
    </location>
</feature>
<feature type="mutagenesis site" description="Abolishes inhibition of NFKB2 processing; when associated with A-52." evidence="10">
    <original>C</original>
    <variation>A</variation>
    <location>
        <position position="55"/>
    </location>
</feature>
<feature type="mutagenesis site" description="Strongly reduces 'Lys-63'-linked ubiquitination; when associated with A-69. Abolishes inhibition of NFKB2 processing; when associated with A-69." evidence="10 16">
    <original>C</original>
    <variation>A</variation>
    <location>
        <position position="67"/>
    </location>
</feature>
<feature type="mutagenesis site" description="Strongly reduces 'Lys-63'-linked ubiquitination; when associated with A-69. Abolishes inhibition of NFKB2 processing; when associated with A-67." evidence="10 16">
    <original>H</original>
    <variation>A</variation>
    <location>
        <position position="69"/>
    </location>
</feature>
<feature type="mutagenesis site" description="Reduces 'Lys-48'-linked polyubiquitination; when associated with R-155." evidence="16">
    <original>K</original>
    <variation>R</variation>
    <location>
        <position position="106"/>
    </location>
</feature>
<feature type="mutagenesis site" description="Reduces 'Lys-48'-linked polyubiquitination; when associated with R-106." evidence="16">
    <original>K</original>
    <variation>R</variation>
    <location>
        <position position="155"/>
    </location>
</feature>
<feature type="mutagenesis site" description="Abolished ubiquitination by the SCF(FBXL2) complex." evidence="19">
    <original>K</original>
    <variation>R</variation>
    <location>
        <position position="328"/>
    </location>
</feature>
<feature type="mutagenesis site" description="Decreased interaction with FBXL2." evidence="19">
    <original>W</original>
    <variation>A</variation>
    <location>
        <position position="419"/>
    </location>
</feature>
<feature type="mutagenesis site" description="Loss of interaction with MAVS." evidence="17">
    <original>Y</original>
    <variation>F</variation>
    <location>
        <position position="440"/>
    </location>
</feature>
<feature type="mutagenesis site" description="Loss of interaction with MAVS." evidence="17">
    <original>F</original>
    <variation>Y</variation>
    <location>
        <position position="473"/>
    </location>
</feature>
<feature type="sequence conflict" description="In Ref. 2; AAC52710." evidence="29" ref="2">
    <original>CE</original>
    <variation>WQ</variation>
    <location>
        <begin position="72"/>
        <end position="73"/>
    </location>
</feature>
<feature type="sequence conflict" description="In Ref. 1; AAC52175." evidence="29" ref="1">
    <original>M</original>
    <variation>T</variation>
    <location>
        <position position="390"/>
    </location>
</feature>
<feature type="helix" evidence="32">
    <location>
        <begin position="377"/>
        <end position="409"/>
    </location>
</feature>
<feature type="strand" evidence="32">
    <location>
        <begin position="413"/>
        <end position="421"/>
    </location>
</feature>
<feature type="helix" evidence="32">
    <location>
        <begin position="424"/>
        <end position="432"/>
    </location>
</feature>
<feature type="strand" evidence="32">
    <location>
        <begin position="444"/>
        <end position="447"/>
    </location>
</feature>
<feature type="strand" evidence="32">
    <location>
        <begin position="452"/>
        <end position="458"/>
    </location>
</feature>
<feature type="helix" evidence="32">
    <location>
        <begin position="463"/>
        <end position="465"/>
    </location>
</feature>
<feature type="turn" evidence="32">
    <location>
        <begin position="466"/>
        <end position="468"/>
    </location>
</feature>
<feature type="strand" evidence="32">
    <location>
        <begin position="469"/>
        <end position="477"/>
    </location>
</feature>
<feature type="helix" evidence="32">
    <location>
        <begin position="482"/>
        <end position="484"/>
    </location>
</feature>
<feature type="strand" evidence="32">
    <location>
        <begin position="493"/>
        <end position="497"/>
    </location>
</feature>
<feature type="strand" evidence="32">
    <location>
        <begin position="507"/>
        <end position="511"/>
    </location>
</feature>
<feature type="helix" evidence="32">
    <location>
        <begin position="518"/>
        <end position="520"/>
    </location>
</feature>
<feature type="strand" evidence="32">
    <location>
        <begin position="524"/>
        <end position="527"/>
    </location>
</feature>
<feature type="strand" evidence="32">
    <location>
        <begin position="531"/>
        <end position="538"/>
    </location>
</feature>
<feature type="helix" evidence="32">
    <location>
        <begin position="539"/>
        <end position="544"/>
    </location>
</feature>
<feature type="strand" evidence="32">
    <location>
        <begin position="552"/>
        <end position="559"/>
    </location>
</feature>
<reference key="1">
    <citation type="journal article" date="1995" name="Science">
        <title>Involvement of CRAF1, a relative of TRAF, in CD40 signaling.</title>
        <authorList>
            <person name="Cheng G."/>
            <person name="Cleary A.M."/>
            <person name="Ye Z.S."/>
            <person name="Hong D.I."/>
            <person name="Lederman S."/>
            <person name="Baltimore D."/>
        </authorList>
    </citation>
    <scope>NUCLEOTIDE SEQUENCE [MRNA]</scope>
    <scope>INTERACTION WITH TNFRSF5</scope>
</reference>
<reference key="2">
    <citation type="journal article" date="1996" name="Dev. Biol.">
        <title>A candidate gene for the amnionless gastrulation stage mouse mutation encodes a TRAF-related protein.</title>
        <authorList>
            <person name="Wang X."/>
            <person name="Bornslaeger E.A."/>
            <person name="Haub O."/>
            <person name="Tomihara-Newberger C."/>
            <person name="Lonberg N."/>
            <person name="Dinulos M.B."/>
            <person name="Disteche C.M."/>
            <person name="Copeland N.G."/>
            <person name="Gilbert D.J."/>
            <person name="Jenkins N.A."/>
            <person name="Lacy E."/>
        </authorList>
    </citation>
    <scope>NUCLEOTIDE SEQUENCE [MRNA]</scope>
    <scope>TISSUE SPECIFICITY</scope>
    <source>
        <strain>C57BL/6J</strain>
        <tissue>Brain</tissue>
    </source>
</reference>
<reference key="3">
    <citation type="submission" date="2005-09" db="EMBL/GenBank/DDBJ databases">
        <authorList>
            <person name="Mural R.J."/>
            <person name="Adams M.D."/>
            <person name="Myers E.W."/>
            <person name="Smith H.O."/>
            <person name="Venter J.C."/>
        </authorList>
    </citation>
    <scope>NUCLEOTIDE SEQUENCE [LARGE SCALE GENOMIC DNA]</scope>
</reference>
<reference key="4">
    <citation type="journal article" date="2004" name="Genome Res.">
        <title>The status, quality, and expansion of the NIH full-length cDNA project: the Mammalian Gene Collection (MGC).</title>
        <authorList>
            <consortium name="The MGC Project Team"/>
        </authorList>
    </citation>
    <scope>NUCLEOTIDE SEQUENCE [LARGE SCALE MRNA]</scope>
    <source>
        <tissue>Brain</tissue>
    </source>
</reference>
<reference key="5">
    <citation type="journal article" date="1996" name="Immunity">
        <title>Targeted disruption of TRAF3 leads to postnatal lethality and defective T-dependent immune responses.</title>
        <authorList>
            <person name="Xu Y."/>
            <person name="Cheng G."/>
            <person name="Baltimore D."/>
        </authorList>
    </citation>
    <scope>DISRUPTION PHENOTYPE</scope>
    <scope>FUNCTION</scope>
</reference>
<reference key="6">
    <citation type="journal article" date="2006" name="J. Exp. Med.">
        <title>Rescue of TRAF3-null mice by p100 NF-kappa B deficiency.</title>
        <authorList>
            <person name="He J.Q."/>
            <person name="Zarnegar B."/>
            <person name="Oganesyan G."/>
            <person name="Saha S.K."/>
            <person name="Yamazaki S."/>
            <person name="Doyle S.E."/>
            <person name="Dempsey P.W."/>
            <person name="Cheng G."/>
        </authorList>
    </citation>
    <scope>DISRUPTION PHENOTYPE</scope>
    <scope>FUNCTION</scope>
</reference>
<reference key="7">
    <citation type="journal article" date="2006" name="Nature">
        <title>Specificity in Toll-like receptor signalling through distinct effector functions of TRAF3 and TRAF6.</title>
        <authorList>
            <person name="Hacker H."/>
            <person name="Redecke V."/>
            <person name="Blagoev B."/>
            <person name="Kratchmarova I."/>
            <person name="Hsu L.C."/>
            <person name="Wang G.G."/>
            <person name="Kamps M.P."/>
            <person name="Raz E."/>
            <person name="Wagner H."/>
            <person name="Hacker G."/>
            <person name="Mann M."/>
            <person name="Karin M."/>
        </authorList>
    </citation>
    <scope>FUNCTION</scope>
    <scope>INTERACTION WITH MYD88</scope>
    <scope>IDENTIFICATION IN A COMPLEX WITH TRAF6</scope>
</reference>
<reference key="8">
    <citation type="journal article" date="2006" name="Nature">
        <title>Critical role of TRAF3 in the Toll-like receptor-dependent and -independent antiviral response.</title>
        <authorList>
            <person name="Oganesyan G."/>
            <person name="Saha S.K."/>
            <person name="Guo B."/>
            <person name="He J.Q."/>
            <person name="Shahangian A."/>
            <person name="Zarnegar B."/>
            <person name="Perry A."/>
            <person name="Cheng G."/>
        </authorList>
    </citation>
    <scope>INTERACTION WITH TICAM1</scope>
    <scope>FUNCTION</scope>
</reference>
<reference key="9">
    <citation type="journal article" date="2007" name="J. Biol. Chem.">
        <title>Specificity of TRAF3 in its negative regulation of the noncanonical NF-kappa B pathway.</title>
        <authorList>
            <person name="He J.Q."/>
            <person name="Saha S.K."/>
            <person name="Kang J.R."/>
            <person name="Zarnegar B."/>
            <person name="Cheng G."/>
        </authorList>
    </citation>
    <scope>FUNCTION</scope>
    <scope>DOMAIN</scope>
    <scope>INTERACTION WITH MAP3K14</scope>
    <scope>MUTAGENESIS OF CYS-52; CYS-55; CYS-67 AND HIS-69</scope>
</reference>
<reference key="10">
    <citation type="journal article" date="2007" name="Immunity">
        <title>Tumor necrosis factor receptor-associated factor 3 is a critical regulator of B cell homeostasis in secondary lymphoid organs.</title>
        <authorList>
            <person name="Xie P."/>
            <person name="Stunz L.L."/>
            <person name="Larison K.D."/>
            <person name="Yang B."/>
            <person name="Bishop G.A."/>
        </authorList>
    </citation>
    <scope>FUNCTION</scope>
</reference>
<reference key="11">
    <citation type="journal article" date="2008" name="Immunity">
        <title>TRAF2 and TRAF3 signal adapters act cooperatively to control the maturation and survival signals delivered to B cells by the BAFF receptor.</title>
        <authorList>
            <person name="Gardam S."/>
            <person name="Sierro F."/>
            <person name="Basten A."/>
            <person name="Mackay F."/>
            <person name="Brink R."/>
        </authorList>
    </citation>
    <scope>FUNCTION</scope>
</reference>
<reference key="12">
    <citation type="journal article" date="2008" name="J. Biol. Chem.">
        <title>FLN29 deficiency reveals its negative regulatory role in the Toll-like receptor (TLR) and retinoic acid-inducible gene I (RIG-I)-like helicase signaling pathway.</title>
        <authorList>
            <person name="Sanada T."/>
            <person name="Takaesu G."/>
            <person name="Mashima R."/>
            <person name="Yoshida R."/>
            <person name="Kobayashi T."/>
            <person name="Yoshimura A."/>
        </authorList>
    </citation>
    <scope>INTERACTION WITH TRAFD1</scope>
</reference>
<reference key="13">
    <citation type="journal article" date="2008" name="Nat. Immunol.">
        <title>Nonredundant and complementary functions of TRAF2 and TRAF3 in a ubiquitination cascade that activates NIK-dependent alternative NF-kappaB signaling.</title>
        <authorList>
            <person name="Vallabhapurapu S."/>
            <person name="Matsuzawa A."/>
            <person name="Zhang W."/>
            <person name="Tseng P.H."/>
            <person name="Keats J.J."/>
            <person name="Wang H."/>
            <person name="Vignali D.A."/>
            <person name="Bergsagel P.L."/>
            <person name="Karin M."/>
        </authorList>
    </citation>
    <scope>FUNCTION</scope>
    <scope>DISRUPTION PHENOTYPE</scope>
    <scope>IDENTIFICATION IN A COMPLEX WITH TRAF2; BIRC3 AND MAP3K14</scope>
    <scope>UBIQUITINATION</scope>
    <scope>TISSUE SPECIFICITY</scope>
</reference>
<reference key="14">
    <citation type="journal article" date="2008" name="Nat. Immunol.">
        <title>Noncanonical NF-kappaB activation requires coordinated assembly of a regulatory complex of the adaptors cIAP1, cIAP2, TRAF2 and TRAF3 and the kinase NIK.</title>
        <authorList>
            <person name="Zarnegar B.J."/>
            <person name="Wang Y."/>
            <person name="Mahoney D.J."/>
            <person name="Dempsey P.W."/>
            <person name="Cheung H.H."/>
            <person name="He J."/>
            <person name="Shiba T."/>
            <person name="Yang X."/>
            <person name="Yeh W.C."/>
            <person name="Mak T.W."/>
            <person name="Korneluk R.G."/>
            <person name="Cheng G."/>
        </authorList>
    </citation>
    <scope>FUNCTION</scope>
    <scope>INTERACTION WITH MAP3K14</scope>
</reference>
<reference key="15">
    <citation type="journal article" date="2009" name="Int. Immunol.">
        <title>TRAF2 and TRAF3 independently mediate Ig class switching driven by CD40.</title>
        <authorList>
            <person name="Jabara H.H."/>
            <person name="Weng Y."/>
            <person name="Sannikova T."/>
            <person name="Geha R.S."/>
        </authorList>
    </citation>
    <scope>FUNCTION</scope>
</reference>
<reference key="16">
    <citation type="journal article" date="2010" name="Nat. Immunol.">
        <title>Different modes of ubiquitination of the adaptor TRAF3 selectively activate the expression of type I interferons and proinflammatory cytokines.</title>
        <authorList>
            <person name="Tseng P.H."/>
            <person name="Matsuzawa A."/>
            <person name="Zhang W."/>
            <person name="Mino T."/>
            <person name="Vignali D.A."/>
            <person name="Karin M."/>
        </authorList>
    </citation>
    <scope>FUNCTION</scope>
    <scope>E3 PROTEIN-UBIQUITIN LIGASE ACTIVITY</scope>
    <scope>SUBUNIT</scope>
    <scope>IDENTIFICATION IN A COMPLEX WITH TLR4; TRAF6; MAP3K7; MYD88; IKBKG; TICAM1; BIRC2; BIRC3 AND UBE2N</scope>
    <scope>INTERACTION WITH TLR4</scope>
    <scope>SUBCELLULAR LOCATION</scope>
    <scope>TISSUE SPECIFICITY</scope>
    <scope>UBIQUITINATION</scope>
    <scope>MUTAGENESIS OF CYS-67; HIS-69; LYS-106 AND LYS-155</scope>
</reference>
<reference key="17">
    <citation type="journal article" date="2013" name="Immunity">
        <title>The autoimmunity-associated gene PTPN22 potentiates toll-like receptor-driven, type 1 interferon-dependent immunity.</title>
        <authorList>
            <person name="Wang Y."/>
            <person name="Shaked I."/>
            <person name="Stanford S.M."/>
            <person name="Zhou W."/>
            <person name="Curtsinger J.M."/>
            <person name="Mikulski Z."/>
            <person name="Shaheen Z.R."/>
            <person name="Cheng G."/>
            <person name="Sawatzke K."/>
            <person name="Campbell A.M."/>
            <person name="Auger J.L."/>
            <person name="Bilgic H."/>
            <person name="Shoyama F.M."/>
            <person name="Schmeling D.O."/>
            <person name="Balfour H.H. Jr."/>
            <person name="Hasegawa K."/>
            <person name="Chan A.C."/>
            <person name="Corbett J.A."/>
            <person name="Binstadt B.A."/>
            <person name="Mescher M.F."/>
            <person name="Ley K."/>
            <person name="Bottini N."/>
            <person name="Peterson E.J."/>
        </authorList>
    </citation>
    <scope>INTERACTION WITH PTPN22</scope>
</reference>
<reference key="18">
    <citation type="journal article" date="2013" name="Nature">
        <title>OTUD7B controls non-canonical NF-kappaB activation through deubiquitination of TRAF3.</title>
        <authorList>
            <person name="Hu H."/>
            <person name="Brittain G.C."/>
            <person name="Chang J.H."/>
            <person name="Puebla-Osorio N."/>
            <person name="Jin J."/>
            <person name="Zal A."/>
            <person name="Xiao Y."/>
            <person name="Cheng X."/>
            <person name="Chang M."/>
            <person name="Fu Y.X."/>
            <person name="Zal T."/>
            <person name="Zhu C."/>
            <person name="Sun S.C."/>
        </authorList>
    </citation>
    <scope>UBIQUITINATION</scope>
    <scope>DEUBIQUITINATION BY OTUD7B</scope>
</reference>
<reference key="19">
    <citation type="journal article" date="2013" name="Nat. Immunol.">
        <title>A combinatorial F box protein directed pathway controls TRAF adaptor stability to regulate inflammation.</title>
        <authorList>
            <person name="Chen B.B."/>
            <person name="Coon T.A."/>
            <person name="Glasser J.R."/>
            <person name="McVerry B.J."/>
            <person name="Zhao J."/>
            <person name="Zhao Y."/>
            <person name="Zou C."/>
            <person name="Ellis B."/>
            <person name="Sciurba F.C."/>
            <person name="Zhang Y."/>
            <person name="Mallampalli R.K."/>
        </authorList>
    </citation>
    <scope>UBIQUITINATION AT LYS-328</scope>
    <scope>MUTAGENESIS OF LYS-328 AND TRP-419</scope>
</reference>
<reference key="20">
    <citation type="journal article" date="2015" name="Immunity">
        <title>Deubiquitinase MYSM1 Regulates Innate Immunity through Inactivation of TRAF3 and TRAF6 Complexes.</title>
        <authorList>
            <person name="Panda S."/>
            <person name="Nilsson J.A."/>
            <person name="Gekara N.O."/>
        </authorList>
    </citation>
    <scope>FUNCTION</scope>
    <scope>DEUBIQUITINATION BY MYSM1</scope>
</reference>
<reference key="21">
    <citation type="journal article" date="2015" name="Sci. Rep.">
        <title>Catalytic subunits of the phosphatase calcineurin interact with NF-kappaB-inducing kinase (NIK) and attenuate NIK-dependent gene expression.</title>
        <authorList>
            <person name="Shinzawa M."/>
            <person name="Konno H."/>
            <person name="Qin J."/>
            <person name="Akiyama N."/>
            <person name="Miyauchi M."/>
            <person name="Ohashi H."/>
            <person name="Miyamoto-Sato E."/>
            <person name="Yanagawa H."/>
            <person name="Akiyama T."/>
            <person name="Inoue J."/>
        </authorList>
    </citation>
    <scope>INTERACTION WITH PPP3CA AND PPP3CB</scope>
</reference>
<reference key="22">
    <citation type="journal article" date="2015" name="Proc. Natl. Acad. Sci. U.S.A.">
        <title>Induction of USP25 by viral infection promotes innate antiviral responses by mediating the stabilization of TRAF3 and TRAF6.</title>
        <authorList>
            <person name="Lin D."/>
            <person name="Zhang M."/>
            <person name="Zhang M.X."/>
            <person name="Ren Y."/>
            <person name="Jin J."/>
            <person name="Zhao Q."/>
            <person name="Pan Z."/>
            <person name="Wu M."/>
            <person name="Shu H.B."/>
            <person name="Dong C."/>
            <person name="Zhong B."/>
        </authorList>
    </citation>
    <scope>FUNCTION</scope>
    <scope>DEUBIQUITINATION BY USP25</scope>
</reference>
<reference key="23">
    <citation type="journal article" date="2019" name="Mol. Immunol.">
        <title>USP25 promotes endotoxin tolerance via suppressing K48-linked ubiquitination and degradation of TRAF3 in Kupffer cells.</title>
        <authorList>
            <person name="Wen J."/>
            <person name="Bai H."/>
            <person name="Chen N."/>
            <person name="Zhang W."/>
            <person name="Zhu X."/>
            <person name="Li P."/>
            <person name="Gong J."/>
        </authorList>
    </citation>
    <scope>FUNCTION</scope>
    <scope>DEUBIQUITINATION BY USP25</scope>
</reference>
<reference evidence="31" key="24">
    <citation type="journal article" date="2012" name="Sci. Signal.">
        <title>Single amino acid substitutions confer the antiviral activity of the TRAF3 adaptor protein onto TRAF5.</title>
        <authorList>
            <person name="Zhang P."/>
            <person name="Reichardt A."/>
            <person name="Liang H."/>
            <person name="Aliyari R."/>
            <person name="Cheng D."/>
            <person name="Wang Y."/>
            <person name="Xu F."/>
            <person name="Cheng G."/>
            <person name="Liu Y."/>
        </authorList>
    </citation>
    <scope>X-RAY CRYSTALLOGRAPHY (2.20 ANGSTROMS) OF 376-567</scope>
    <scope>FUNCTION</scope>
    <scope>INTERACTION WITH MAVS</scope>
    <scope>MUTAGENESIS OF TYR-440 AND PHE-473</scope>
</reference>
<name>TRAF3_MOUSE</name>
<sequence>MESSKKMDAAGTLQPNPPLKLQPDRGAGSVLVPEQGGYKEKFVKTVEDKYKCEKCRLVLCNPKQTECGHRFCESCMAALLSSSSPKCTACQESIIKDKVFKDNCCKREILALQVYCRNEGRGCAEQLTLGHLLVHLKNECQFEELPCLRADCKEKVLRKDLRDHVEKACKYREATCSHCKSQVPMIKLQKHEDTDCPCVVVSCPHKCSVQTLLRSELSAHLSECVNAPSTCSFKRYGCVFQGTNQQIKAHEASSAVQHVNLLKEWSNSLEKKVSLLQNESVEKNKSIQSLHNQICSFEIEIERQKEMLRNNESKILHLQRVIDSQAEKLKELDKEIRPFRQNWEEADSMKSSVESLQNRVTELESVDKSAGQAARNTGLLESQLSRHDQMLSVHDIRLADMDLRFQVLETASYNGVLIWKIRDYKRRKQEAVMGKTLSLYSQPFYTGYFGYKMCARVYLNGDGMGKGTHLSLFFVIMRGEYDALLPWPFKQKVTLMLMDQGSSRRHLGDAFKPDPNSSSFKKPTGEMNIASGCPVFVAQTVLENGTYIKDDTIFIKVIVDTSDLPDP</sequence>
<comment type="function">
    <text evidence="7 8 9 10 11 12 13 14 15 16 22 23 24 26">Cytoplasmic E3 ubiquitin ligase that regulates various signaling pathways, such as the NF-kappa-B, mitogen-activated protein kinase (MAPK) and interferon regulatory factor (IRF) pathways, and thus controls a lot of biological processes in both immune and non-immune cell types (PubMed:17015635). In TLR and RLR signaling pathways, acts as an E3 ubiquitin ligase promoting the synthesis of 'Lys-63'-linked polyubiquitin chains on several substrates such as ASC that lead to the activation of the type I interferon response or the inflammasome (PubMed:19898473, PubMed:23150880, PubMed:23871208, PubMed:26305951). Following the activation of certain TLRs such as TLR4, acts as a negative NF-kappa-B regulator, possibly to avoid unregulated inflammatory response, and its degradation via 'Lys-48'-linked polyubiquitination is required for MAPK activation and production of inflammatory cytokines (PubMed:16306937). Alternatively, when TLR4 orchestrates bacterial expulsion, TRAF3 undergoes 'Lys-33'-linked polyubiquitination and subsequently binds to RALGDS, mobilizing the exocyst complex to rapidly expel intracellular bacteria back for clearance. Also acts as a constitutive negative regulator of the alternative NF-kappa-B pathway, which controls B-cell survival and lymphoid organ development (PubMed:17723217). Required for normal antibody isotype switching from IgM to IgG (PubMed:19228877). Plays a role T-cell dependent immune responses (PubMed:8934568). Down-regulates proteolytic processing of NFKB2, and thereby inhibits non-canonical activation of NF-kappa-B. Promotes ubiquitination and proteasomal degradation of MAP3K14.</text>
</comment>
<comment type="catalytic activity">
    <reaction>
        <text>S-ubiquitinyl-[E2 ubiquitin-conjugating enzyme]-L-cysteine + [acceptor protein]-L-lysine = [E2 ubiquitin-conjugating enzyme]-L-cysteine + N(6)-ubiquitinyl-[acceptor protein]-L-lysine.</text>
        <dbReference type="EC" id="2.3.2.27"/>
    </reaction>
</comment>
<comment type="subunit">
    <text evidence="1 17 20 21">Homotrimer. Heterotrimer with TRAF2 and TRAF5. Interacts with LTBR/TNFRSF3, TNFRSF4, TNFRSF5/CD40, TNFRSF8/CD30, TNFRSF13C TNFRSF17/BCMA, TLR4 and EDAR. Interacts with MAP3K5, MAP3K14, TRAIP/TRIP, TDP2/TTRAP, TANK/ITRAF and TRAF3IP1. Interaction with TNFRSF5/CD40 is modulated by TANK/ITRAF, which competes for the same binding site. Interacts with TICAM1. Interacts with TRAFD1. Interacts with OTUB1, OTUB2 and OTUD5. Interacts with RNF216, OPTN and TBK1 (By similarity). Identified in a complex with TRAF2, MAP3K14 and BIRC3. Upon exposure to bacterial lipopolysaccharide (LPS), recruited to a transient complex containing TLR4, TRAF3, TRAF6, IKBKG, MAP3K7, MYD88, TICAM1, BIRC2, BIRC3 and UBE2N. Interacts (via RING-type zinc finger domain) with SRC. Interacts with CARD14 (By similarity). Interacts (via MATH domain) with PTPN22; the interaction promotes TRAF3 polyubiquitination (PubMed:23871208). Interacts with MAVS (PubMed:23150880). Directly interacts with DDX3X; this interaction stimulates TRAF3 'Lys-63' ubiquitination (By similarity). Interacts with IRF3 (By similarity). Interacts with IKBKE in the course of viral infection (By similarity). Interacts with TRIM35 (By similarity). Interacts with GAPDH; promoting TRAF3 ubiquitination (By similarity). Interacts with PPP3CA and PPP3CB (PubMed:26029823). Interacts with RALGDS (By similarity). Interacts with FBXO11 (By similarity).</text>
</comment>
<comment type="interaction">
    <interactant intactId="EBI-520135">
        <id>Q60803</id>
    </interactant>
    <interactant intactId="EBI-3862816">
        <id>Q8VCF0</id>
        <label>Mavs</label>
    </interactant>
    <organismsDiffer>false</organismsDiffer>
    <experiments>4</experiments>
</comment>
<comment type="interaction">
    <interactant intactId="EBI-520135">
        <id>Q60803</id>
    </interactant>
    <interactant intactId="EBI-525108">
        <id>P22366</id>
        <label>Myd88</label>
    </interactant>
    <organismsDiffer>false</organismsDiffer>
    <experiments>5</experiments>
</comment>
<comment type="interaction">
    <interactant intactId="EBI-520135">
        <id>Q60803</id>
    </interactant>
    <interactant intactId="EBI-3649271">
        <id>Q80UF7</id>
        <label>Ticam1</label>
    </interactant>
    <organismsDiffer>false</organismsDiffer>
    <experiments>2</experiments>
</comment>
<comment type="interaction">
    <interactant intactId="EBI-520135">
        <id>Q60803</id>
    </interactant>
    <interactant intactId="EBI-647362">
        <id>O35305</id>
        <label>Tnfrsf11a</label>
    </interactant>
    <organismsDiffer>false</organismsDiffer>
    <experiments>3</experiments>
</comment>
<comment type="interaction">
    <interactant intactId="EBI-520135">
        <id>Q60803</id>
    </interactant>
    <interactant intactId="EBI-520016">
        <id>P39429</id>
        <label>Traf2</label>
    </interactant>
    <organismsDiffer>false</organismsDiffer>
    <experiments>2</experiments>
</comment>
<comment type="interaction">
    <interactant intactId="EBI-520135">
        <id>Q60803</id>
    </interactant>
    <interactant intactId="EBI-413074">
        <id>P62991</id>
        <label>Ubc</label>
    </interactant>
    <organismsDiffer>false</organismsDiffer>
    <experiments>2</experiments>
</comment>
<comment type="interaction">
    <interactant intactId="EBI-520135">
        <id>Q60803</id>
    </interactant>
    <interactant intactId="EBI-1211241">
        <id>Q9Y2R2</id>
        <label>PTPN22</label>
    </interactant>
    <organismsDiffer>true</organismsDiffer>
    <experiments>5</experiments>
</comment>
<comment type="interaction">
    <interactant intactId="EBI-520135">
        <id>Q60803</id>
    </interactant>
    <interactant intactId="EBI-356402">
        <id>Q9UHD2</id>
        <label>TBK1</label>
    </interactant>
    <organismsDiffer>true</organismsDiffer>
    <experiments>2</experiments>
</comment>
<comment type="subcellular location">
    <subcellularLocation>
        <location evidence="16">Cytoplasm</location>
    </subcellularLocation>
    <subcellularLocation>
        <location evidence="16">Endosome</location>
    </subcellularLocation>
    <subcellularLocation>
        <location evidence="1">Mitochondrion</location>
    </subcellularLocation>
    <text evidence="1 16">Undergoes endocytosis together with TLR4 upon LPS signaling (PubMed:19898473). Co-localized to mitochondria with TRIM35 (By similarity).</text>
</comment>
<comment type="tissue specificity">
    <text evidence="13 16 25">Detected in bone marrow macrophages and spleen B-cells (at protein level). In adult, highest in brain. Also found in kidney, heart, thymus, spleen, lung, muscle, testis and ovary. Not found in liver.</text>
</comment>
<comment type="developmental stage">
    <text>In the embryo, expressed from 6.5 dpc with highest levels found between 11.5 dpc and 13.5 dpc. At late stages of gestation, from 14.5 dpc, only low levels are detected.</text>
</comment>
<comment type="domain">
    <text evidence="10">The MATH/TRAF domain binds to receptor cytoplasmic domains.</text>
</comment>
<comment type="domain">
    <text evidence="10">The Ring-type zinc finger domain is required for its function in down-regulation of NFKB2 proteolytic processing.</text>
</comment>
<comment type="PTM">
    <text evidence="13 16 18 19 23">Undergoes 'Lys-48'-linked polyubiquitination, leading to its proteasomal degradation in response to signaling by TNFSF13B, TLR4 or through CD40 (PubMed:19898473). 'Lys-48'-linked polyubiquitinated form is deubiquitinated by OTUD7B, preventing TRAF3 proteolysis and over-activation of non-canonical NF-kappa-B (PubMed:23334419). Undergoes 'Lys-63'-linked ubiquitination during early stages of virus infection, and 'Lys-48'-linked ubiquitination during later stages. Undergoes both 'Lys-48'-linked and 'Lys-63'-linked ubiquitination in response to TLR3 and TLR4 signaling. 'Lys-63'-linked ubiquitination can be mediated by TRIM35. Deubiquitinated by OTUB1, OTUB2 and OTUD5. Undergoes 'Lys-63'-linked deubiquitination by MYSM1 to terminate the pattern-recognition receptors/PRRs pathways (PubMed:26474655). Ubiquitinated at Lys-328 by the SCF(FBXL2) complex, leading to its degradation by the proteasome (PubMed:23542741).</text>
</comment>
<comment type="PTM">
    <text evidence="1 13 16 18 22 23 24">Undergoes 'Lys-48'-linked polyubiquitination, leading to its proteasomal degradation in response to signaling by TNFSF13B, TLR4 or through CD40. 'Lys-48'-linked polyubiquitinated form is deubiquitinated by OTUD7B, preventing TRAF3 proteolysis and over-activation of non-canonical NF-kappa-B. Undergoes 'Lys-63'-linked ubiquitination during early stages of virus infection, and 'Lys-48'-linked ubiquitination during later stages. Undergoes both 'Lys-48'-linked and 'Lys-63'-linked ubiquitination in response to TLR3 and TLR4 signaling. 'Lys-63'-linked ubiquitination can be mediated by TRIM35. Deubiquitinated by OTUB1, OTUB2 and OTUD5. Undergoes 'Lys-63'-linked deubiquitination by MYSM1 to terminate the pattern-recognition receptors/PRRs pathways (By similarity). Also undergoes 'Lys-29'-linked ubiquitination on Cys-55 and Cys-123 by NEDD4L; leading to increased 'Lys-48'- and 'Lys-63'-linked ubiquitination as well as increased binding to TBK1. TLR4 signals emanating from bacteria containing vesicles trigger 'Lys-33'-linked polyubiquitination that promotes the assembly of the exocyst complex thereby connecting innate immune signaling to the cellular trafficking apparatus (By similarity). Deubiquitinated by USP25 during viral infection, leading to TRAF3 stabilization and type I interferon production (PubMed:26305951). 'Lys-63'-linked ubiquitination by FBXO11 in a NEDD8-dependent manner promotes the amplification of IFN-I signaling (By similarity).</text>
</comment>
<comment type="disruption phenotype">
    <text evidence="9 13 26">Newborns appear normal, but do not thrive. Their blood glucose levels and leukocyte levels decrease steadily, the spleen size is dramatically reduced, and they become progressively runted. They die about ten days after birth. Mice exhibit abnormally high MAP3K14 protein levels and constitutive proteolytic processing of NFKB2/p100, leading to constitutive activation of NF-kappa-B.</text>
</comment>
<comment type="similarity">
    <text evidence="29">Belongs to the TNF receptor-associated factor family. A subfamily.</text>
</comment>
<organism>
    <name type="scientific">Mus musculus</name>
    <name type="common">Mouse</name>
    <dbReference type="NCBI Taxonomy" id="10090"/>
    <lineage>
        <taxon>Eukaryota</taxon>
        <taxon>Metazoa</taxon>
        <taxon>Chordata</taxon>
        <taxon>Craniata</taxon>
        <taxon>Vertebrata</taxon>
        <taxon>Euteleostomi</taxon>
        <taxon>Mammalia</taxon>
        <taxon>Eutheria</taxon>
        <taxon>Euarchontoglires</taxon>
        <taxon>Glires</taxon>
        <taxon>Rodentia</taxon>
        <taxon>Myomorpha</taxon>
        <taxon>Muroidea</taxon>
        <taxon>Muridae</taxon>
        <taxon>Murinae</taxon>
        <taxon>Mus</taxon>
        <taxon>Mus</taxon>
    </lineage>
</organism>
<accession>Q60803</accession>
<accession>B2RPW3</accession>
<accession>Q62380</accession>